<organism evidence="4">
    <name type="scientific">Plasmodium chabaudi chabaudi</name>
    <dbReference type="NCBI Taxonomy" id="31271"/>
    <lineage>
        <taxon>Eukaryota</taxon>
        <taxon>Sar</taxon>
        <taxon>Alveolata</taxon>
        <taxon>Apicomplexa</taxon>
        <taxon>Aconoidasida</taxon>
        <taxon>Haemosporida</taxon>
        <taxon>Plasmodiidae</taxon>
        <taxon>Plasmodium</taxon>
        <taxon>Plasmodium (Vinckeia)</taxon>
    </lineage>
</organism>
<name>FEN1_PLACU</name>
<proteinExistence type="inferred from homology"/>
<dbReference type="EC" id="3.1.-.-" evidence="1"/>
<dbReference type="EMBL" id="LK022887">
    <property type="protein sequence ID" value="VTZ66406.1"/>
    <property type="molecule type" value="Genomic_DNA"/>
</dbReference>
<dbReference type="EMBL" id="LT608176">
    <property type="protein sequence ID" value="SCM01867.1"/>
    <property type="molecule type" value="Genomic_DNA"/>
</dbReference>
<dbReference type="RefSeq" id="XP_741275.1">
    <property type="nucleotide sequence ID" value="XM_736182.1"/>
</dbReference>
<dbReference type="SMR" id="Q4XXP8"/>
<dbReference type="EnsemblProtists" id="CDU21546">
    <property type="protein sequence ID" value="CDU21546"/>
    <property type="gene ID" value="PCHAS_100700"/>
</dbReference>
<dbReference type="GeneID" id="3494355"/>
<dbReference type="KEGG" id="pcb:PCHAS_1007000"/>
<dbReference type="VEuPathDB" id="PlasmoDB:PCHAS_1007000"/>
<dbReference type="eggNOG" id="KOG2519">
    <property type="taxonomic scope" value="Eukaryota"/>
</dbReference>
<dbReference type="HOGENOM" id="CLU_032444_1_0_1"/>
<dbReference type="OrthoDB" id="1937206at2759"/>
<dbReference type="Proteomes" id="UP000071118">
    <property type="component" value="Chromosome 10"/>
</dbReference>
<dbReference type="Proteomes" id="UP000507163">
    <property type="component" value="Chromosome 10"/>
</dbReference>
<dbReference type="GO" id="GO:0005739">
    <property type="term" value="C:mitochondrion"/>
    <property type="evidence" value="ECO:0007669"/>
    <property type="project" value="UniProtKB-SubCell"/>
</dbReference>
<dbReference type="GO" id="GO:0005730">
    <property type="term" value="C:nucleolus"/>
    <property type="evidence" value="ECO:0007669"/>
    <property type="project" value="UniProtKB-SubCell"/>
</dbReference>
<dbReference type="GO" id="GO:0005654">
    <property type="term" value="C:nucleoplasm"/>
    <property type="evidence" value="ECO:0007669"/>
    <property type="project" value="UniProtKB-SubCell"/>
</dbReference>
<dbReference type="GO" id="GO:0008409">
    <property type="term" value="F:5'-3' exonuclease activity"/>
    <property type="evidence" value="ECO:0007669"/>
    <property type="project" value="UniProtKB-UniRule"/>
</dbReference>
<dbReference type="GO" id="GO:0017108">
    <property type="term" value="F:5'-flap endonuclease activity"/>
    <property type="evidence" value="ECO:0007669"/>
    <property type="project" value="UniProtKB-UniRule"/>
</dbReference>
<dbReference type="GO" id="GO:0003677">
    <property type="term" value="F:DNA binding"/>
    <property type="evidence" value="ECO:0007669"/>
    <property type="project" value="UniProtKB-UniRule"/>
</dbReference>
<dbReference type="GO" id="GO:0000287">
    <property type="term" value="F:magnesium ion binding"/>
    <property type="evidence" value="ECO:0007669"/>
    <property type="project" value="UniProtKB-UniRule"/>
</dbReference>
<dbReference type="GO" id="GO:0006284">
    <property type="term" value="P:base-excision repair"/>
    <property type="evidence" value="ECO:0007669"/>
    <property type="project" value="UniProtKB-UniRule"/>
</dbReference>
<dbReference type="GO" id="GO:0043137">
    <property type="term" value="P:DNA replication, removal of RNA primer"/>
    <property type="evidence" value="ECO:0007669"/>
    <property type="project" value="UniProtKB-UniRule"/>
</dbReference>
<dbReference type="CDD" id="cd09907">
    <property type="entry name" value="H3TH_FEN1-Euk"/>
    <property type="match status" value="1"/>
</dbReference>
<dbReference type="CDD" id="cd09867">
    <property type="entry name" value="PIN_FEN1"/>
    <property type="match status" value="1"/>
</dbReference>
<dbReference type="FunFam" id="1.10.150.20:FF:000009">
    <property type="entry name" value="Flap endonuclease 1"/>
    <property type="match status" value="1"/>
</dbReference>
<dbReference type="FunFam" id="3.40.50.1010:FF:000016">
    <property type="entry name" value="Flap endonuclease 1"/>
    <property type="match status" value="1"/>
</dbReference>
<dbReference type="Gene3D" id="1.10.150.20">
    <property type="entry name" value="5' to 3' exonuclease, C-terminal subdomain"/>
    <property type="match status" value="1"/>
</dbReference>
<dbReference type="Gene3D" id="3.40.50.1010">
    <property type="entry name" value="5'-nuclease"/>
    <property type="match status" value="1"/>
</dbReference>
<dbReference type="HAMAP" id="MF_00614">
    <property type="entry name" value="Fen"/>
    <property type="match status" value="1"/>
</dbReference>
<dbReference type="InterPro" id="IPR002421">
    <property type="entry name" value="5-3_exonuclease"/>
</dbReference>
<dbReference type="InterPro" id="IPR036279">
    <property type="entry name" value="5-3_exonuclease_C_sf"/>
</dbReference>
<dbReference type="InterPro" id="IPR023426">
    <property type="entry name" value="Flap_endonuc"/>
</dbReference>
<dbReference type="InterPro" id="IPR008918">
    <property type="entry name" value="HhH2"/>
</dbReference>
<dbReference type="InterPro" id="IPR029060">
    <property type="entry name" value="PIN-like_dom_sf"/>
</dbReference>
<dbReference type="InterPro" id="IPR006086">
    <property type="entry name" value="XPG-I_dom"/>
</dbReference>
<dbReference type="InterPro" id="IPR006084">
    <property type="entry name" value="XPG/Rad2"/>
</dbReference>
<dbReference type="InterPro" id="IPR019974">
    <property type="entry name" value="XPG_CS"/>
</dbReference>
<dbReference type="InterPro" id="IPR006085">
    <property type="entry name" value="XPG_DNA_repair_N"/>
</dbReference>
<dbReference type="PANTHER" id="PTHR11081:SF9">
    <property type="entry name" value="FLAP ENDONUCLEASE 1"/>
    <property type="match status" value="1"/>
</dbReference>
<dbReference type="PANTHER" id="PTHR11081">
    <property type="entry name" value="FLAP ENDONUCLEASE FAMILY MEMBER"/>
    <property type="match status" value="1"/>
</dbReference>
<dbReference type="Pfam" id="PF00867">
    <property type="entry name" value="XPG_I"/>
    <property type="match status" value="1"/>
</dbReference>
<dbReference type="Pfam" id="PF00752">
    <property type="entry name" value="XPG_N"/>
    <property type="match status" value="1"/>
</dbReference>
<dbReference type="PRINTS" id="PR00853">
    <property type="entry name" value="XPGRADSUPER"/>
</dbReference>
<dbReference type="SMART" id="SM00475">
    <property type="entry name" value="53EXOc"/>
    <property type="match status" value="1"/>
</dbReference>
<dbReference type="SMART" id="SM00279">
    <property type="entry name" value="HhH2"/>
    <property type="match status" value="1"/>
</dbReference>
<dbReference type="SMART" id="SM00484">
    <property type="entry name" value="XPGI"/>
    <property type="match status" value="1"/>
</dbReference>
<dbReference type="SMART" id="SM00485">
    <property type="entry name" value="XPGN"/>
    <property type="match status" value="1"/>
</dbReference>
<dbReference type="SUPFAM" id="SSF47807">
    <property type="entry name" value="5' to 3' exonuclease, C-terminal subdomain"/>
    <property type="match status" value="1"/>
</dbReference>
<dbReference type="SUPFAM" id="SSF88723">
    <property type="entry name" value="PIN domain-like"/>
    <property type="match status" value="1"/>
</dbReference>
<dbReference type="PROSITE" id="PS00841">
    <property type="entry name" value="XPG_1"/>
    <property type="match status" value="1"/>
</dbReference>
<evidence type="ECO:0000255" key="1">
    <source>
        <dbReference type="HAMAP-Rule" id="MF_03140"/>
    </source>
</evidence>
<evidence type="ECO:0000256" key="2">
    <source>
        <dbReference type="SAM" id="MobiDB-lite"/>
    </source>
</evidence>
<evidence type="ECO:0000312" key="3">
    <source>
        <dbReference type="EMBL" id="VTZ66406.1"/>
    </source>
</evidence>
<evidence type="ECO:0000312" key="4">
    <source>
        <dbReference type="Proteomes" id="UP000071118"/>
    </source>
</evidence>
<gene>
    <name evidence="1" type="primary">FEN1</name>
    <name type="ORF">PC000961.02.0</name>
    <name evidence="3" type="ORF">PCHAS_1007000</name>
</gene>
<protein>
    <recommendedName>
        <fullName evidence="1">Flap endonuclease 1</fullName>
        <shortName evidence="1">FEN-1</shortName>
        <ecNumber evidence="1">3.1.-.-</ecNumber>
    </recommendedName>
    <alternativeName>
        <fullName evidence="1">Flap structure-specific endonuclease 1</fullName>
    </alternativeName>
</protein>
<feature type="chain" id="PRO_0000403537" description="Flap endonuclease 1">
    <location>
        <begin position="1"/>
        <end position="479"/>
    </location>
</feature>
<feature type="region of interest" description="N-domain">
    <location>
        <begin position="1"/>
        <end position="106"/>
    </location>
</feature>
<feature type="region of interest" description="I-domain">
    <location>
        <begin position="124"/>
        <end position="266"/>
    </location>
</feature>
<feature type="region of interest" description="Interaction with PCNA" evidence="1">
    <location>
        <begin position="349"/>
        <end position="357"/>
    </location>
</feature>
<feature type="region of interest" description="Disordered" evidence="2">
    <location>
        <begin position="379"/>
        <end position="455"/>
    </location>
</feature>
<feature type="compositionally biased region" description="Basic and acidic residues" evidence="2">
    <location>
        <begin position="403"/>
        <end position="428"/>
    </location>
</feature>
<feature type="binding site" evidence="1">
    <location>
        <position position="34"/>
    </location>
    <ligand>
        <name>Mg(2+)</name>
        <dbReference type="ChEBI" id="CHEBI:18420"/>
        <label>1</label>
    </ligand>
</feature>
<feature type="binding site" evidence="1">
    <location>
        <position position="47"/>
    </location>
    <ligand>
        <name>DNA</name>
        <dbReference type="ChEBI" id="CHEBI:16991"/>
    </ligand>
</feature>
<feature type="binding site" evidence="1">
    <location>
        <position position="72"/>
    </location>
    <ligand>
        <name>DNA</name>
        <dbReference type="ChEBI" id="CHEBI:16991"/>
    </ligand>
</feature>
<feature type="binding site" evidence="1">
    <location>
        <position position="88"/>
    </location>
    <ligand>
        <name>Mg(2+)</name>
        <dbReference type="ChEBI" id="CHEBI:18420"/>
        <label>1</label>
    </ligand>
</feature>
<feature type="binding site" evidence="1">
    <location>
        <position position="160"/>
    </location>
    <ligand>
        <name>DNA</name>
        <dbReference type="ChEBI" id="CHEBI:16991"/>
    </ligand>
</feature>
<feature type="binding site" evidence="1">
    <location>
        <position position="160"/>
    </location>
    <ligand>
        <name>Mg(2+)</name>
        <dbReference type="ChEBI" id="CHEBI:18420"/>
        <label>1</label>
    </ligand>
</feature>
<feature type="binding site" evidence="1">
    <location>
        <position position="162"/>
    </location>
    <ligand>
        <name>Mg(2+)</name>
        <dbReference type="ChEBI" id="CHEBI:18420"/>
        <label>1</label>
    </ligand>
</feature>
<feature type="binding site" evidence="1">
    <location>
        <position position="181"/>
    </location>
    <ligand>
        <name>Mg(2+)</name>
        <dbReference type="ChEBI" id="CHEBI:18420"/>
        <label>2</label>
    </ligand>
</feature>
<feature type="binding site" evidence="1">
    <location>
        <position position="183"/>
    </location>
    <ligand>
        <name>Mg(2+)</name>
        <dbReference type="ChEBI" id="CHEBI:18420"/>
        <label>2</label>
    </ligand>
</feature>
<feature type="binding site" evidence="1">
    <location>
        <position position="244"/>
    </location>
    <ligand>
        <name>DNA</name>
        <dbReference type="ChEBI" id="CHEBI:16991"/>
    </ligand>
</feature>
<feature type="binding site" evidence="1">
    <location>
        <position position="246"/>
    </location>
    <ligand>
        <name>DNA</name>
        <dbReference type="ChEBI" id="CHEBI:16991"/>
    </ligand>
</feature>
<feature type="binding site" evidence="1">
    <location>
        <position position="246"/>
    </location>
    <ligand>
        <name>Mg(2+)</name>
        <dbReference type="ChEBI" id="CHEBI:18420"/>
        <label>2</label>
    </ligand>
</feature>
<reference evidence="4" key="1">
    <citation type="journal article" date="2014" name="BMC Biol.">
        <title>A comprehensive evaluation of rodent malaria parasite genomes and gene expression.</title>
        <authorList>
            <person name="Otto T.D."/>
            <person name="Bohme U."/>
            <person name="Jackson A.P."/>
            <person name="Hunt M."/>
            <person name="Franke-Fayard B."/>
            <person name="Hoeijmakers W.A."/>
            <person name="Religa A.A."/>
            <person name="Robertson L."/>
            <person name="Sanders M."/>
            <person name="Ogun S.A."/>
            <person name="Cunningham D."/>
            <person name="Erhart A."/>
            <person name="Billker O."/>
            <person name="Khan S.M."/>
            <person name="Stunnenberg H.G."/>
            <person name="Langhorne J."/>
            <person name="Holder A.A."/>
            <person name="Waters A.P."/>
            <person name="Newbold C.I."/>
            <person name="Pain A."/>
            <person name="Berriman M."/>
            <person name="Janse C.J."/>
        </authorList>
    </citation>
    <scope>NUCLEOTIDE SEQUENCE [LARGE SCALE GENOMIC DNA]</scope>
    <source>
        <strain evidence="4">AS</strain>
    </source>
</reference>
<reference key="2">
    <citation type="submission" date="2016-08" db="EMBL/GenBank/DDBJ databases">
        <authorList>
            <consortium name="Pathogen Informatics"/>
        </authorList>
    </citation>
    <scope>NUCLEOTIDE SEQUENCE [LARGE SCALE GENOMIC DNA]</scope>
    <source>
        <strain>AJ</strain>
    </source>
</reference>
<accession>Q4XXP8</accession>
<accession>A0A077YE42</accession>
<keyword id="KW-0227">DNA damage</keyword>
<keyword id="KW-0234">DNA repair</keyword>
<keyword id="KW-0235">DNA replication</keyword>
<keyword id="KW-0255">Endonuclease</keyword>
<keyword id="KW-0269">Exonuclease</keyword>
<keyword id="KW-0378">Hydrolase</keyword>
<keyword id="KW-0460">Magnesium</keyword>
<keyword id="KW-0479">Metal-binding</keyword>
<keyword id="KW-0496">Mitochondrion</keyword>
<keyword id="KW-0540">Nuclease</keyword>
<keyword id="KW-0539">Nucleus</keyword>
<keyword id="KW-0597">Phosphoprotein</keyword>
<sequence length="479" mass="54503">MGIKGLTKFIADTAPNAIKEIKIENLMGRVVAIDASMSLYQFIIAIRDGDQYGNLMNEAGETTSHISGLMSRTIKLMENGLKPIYVFDGAPPELKGSELEKRGEKRQKAEELLLKAKEEGNLEEIKKQSGRTVRVTKKQNEEAKKLLTLMGIPVIESPCEAEAQCAFLTKYDMAHATATEDADALVFGTKILIRNLNANASSNKNKNKNSSKRGYILTEINLEQVLKGLKLTMDEFIDFCILCGCDYCDTIKGIGSKTAYNLIKEYNCIENIIKNIDQNKYQVPDNFKYVEARQSFINPKVLEKSEVKIDWCEPKIEELKTFLIKEHNFNEVRVTNYITRLLKARKVTTQRRLDTFFTTCTKKSTKLIIEESQKELLKAKGKGKKRELNDNSTKLNAKKKKTNIKDEKKNTDKMDELKNKSDENFVKDEENDQDDYDQNLFDEKTNSDSGNIKNENIKEDISSNDITMDIPKCTNDIVC</sequence>
<comment type="function">
    <text evidence="1">Structure-specific nuclease with 5'-flap endonuclease and 5'-3' exonuclease activities involved in DNA replication and repair. During DNA replication, cleaves the 5'-overhanging flap structure that is generated by displacement synthesis when DNA polymerase encounters the 5'-end of a downstream Okazaki fragment. It enters the flap from the 5'-end and then tracks to cleave the flap base, leaving a nick for ligation. Also involved in the long patch base excision repair (LP-BER) pathway, by cleaving within the apurinic/apyrimidinic (AP) site-terminated flap. Acts as a genome stabilization factor that prevents flaps from equilibrating into structures that lead to duplications and deletions. Also possesses 5'-3' exonuclease activity on nicked or gapped double-stranded DNA, and exhibits RNase H activity. Also involved in replication and repair of rDNA and in repairing mitochondrial DNA.</text>
</comment>
<comment type="cofactor">
    <cofactor evidence="1">
        <name>Mg(2+)</name>
        <dbReference type="ChEBI" id="CHEBI:18420"/>
    </cofactor>
    <text evidence="1">Binds 2 magnesium ions per subunit. They probably participate in the reaction catalyzed by the enzyme. May bind an additional third magnesium ion after substrate binding.</text>
</comment>
<comment type="subunit">
    <text evidence="1">Interacts with PCNA. Three molecules of FEN1 bind to one PCNA trimer with each molecule binding to one PCNA monomer. PCNA stimulates the nuclease activity without altering cleavage specificity.</text>
</comment>
<comment type="subcellular location">
    <subcellularLocation>
        <location evidence="1">Nucleus</location>
        <location evidence="1">Nucleolus</location>
    </subcellularLocation>
    <subcellularLocation>
        <location evidence="1">Nucleus</location>
        <location evidence="1">Nucleoplasm</location>
    </subcellularLocation>
    <subcellularLocation>
        <location evidence="1">Mitochondrion</location>
    </subcellularLocation>
    <text evidence="1">Resides mostly in the nucleoli and relocalizes to the nucleoplasm upon DNA damage.</text>
</comment>
<comment type="PTM">
    <text evidence="1">Phosphorylated. Phosphorylation upon DNA damage induces relocalization to the nuclear plasma.</text>
</comment>
<comment type="similarity">
    <text evidence="1">Belongs to the XPG/RAD2 endonuclease family. FEN1 subfamily.</text>
</comment>